<accession>Q5X868</accession>
<evidence type="ECO:0000255" key="1">
    <source>
        <dbReference type="HAMAP-Rule" id="MF_00362"/>
    </source>
</evidence>
<evidence type="ECO:0000305" key="2"/>
<feature type="chain" id="PRO_0000154648" description="Large ribosomal subunit protein uL10">
    <location>
        <begin position="1"/>
        <end position="177"/>
    </location>
</feature>
<keyword id="KW-0687">Ribonucleoprotein</keyword>
<keyword id="KW-0689">Ribosomal protein</keyword>
<keyword id="KW-0694">RNA-binding</keyword>
<keyword id="KW-0699">rRNA-binding</keyword>
<dbReference type="EMBL" id="CR628336">
    <property type="protein sequence ID" value="CAH11533.1"/>
    <property type="molecule type" value="Genomic_DNA"/>
</dbReference>
<dbReference type="RefSeq" id="WP_010946071.1">
    <property type="nucleotide sequence ID" value="NC_006368.1"/>
</dbReference>
<dbReference type="SMR" id="Q5X868"/>
<dbReference type="GeneID" id="57034323"/>
<dbReference type="KEGG" id="lpp:lpp0385"/>
<dbReference type="LegioList" id="lpp0385"/>
<dbReference type="HOGENOM" id="CLU_092227_0_1_6"/>
<dbReference type="GO" id="GO:0015934">
    <property type="term" value="C:large ribosomal subunit"/>
    <property type="evidence" value="ECO:0007669"/>
    <property type="project" value="InterPro"/>
</dbReference>
<dbReference type="GO" id="GO:0070180">
    <property type="term" value="F:large ribosomal subunit rRNA binding"/>
    <property type="evidence" value="ECO:0007669"/>
    <property type="project" value="UniProtKB-UniRule"/>
</dbReference>
<dbReference type="GO" id="GO:0003735">
    <property type="term" value="F:structural constituent of ribosome"/>
    <property type="evidence" value="ECO:0007669"/>
    <property type="project" value="InterPro"/>
</dbReference>
<dbReference type="GO" id="GO:0006412">
    <property type="term" value="P:translation"/>
    <property type="evidence" value="ECO:0007669"/>
    <property type="project" value="UniProtKB-UniRule"/>
</dbReference>
<dbReference type="CDD" id="cd05797">
    <property type="entry name" value="Ribosomal_L10"/>
    <property type="match status" value="1"/>
</dbReference>
<dbReference type="Gene3D" id="3.30.70.1730">
    <property type="match status" value="1"/>
</dbReference>
<dbReference type="Gene3D" id="6.10.250.290">
    <property type="match status" value="1"/>
</dbReference>
<dbReference type="HAMAP" id="MF_00362">
    <property type="entry name" value="Ribosomal_uL10"/>
    <property type="match status" value="1"/>
</dbReference>
<dbReference type="InterPro" id="IPR001790">
    <property type="entry name" value="Ribosomal_uL10"/>
</dbReference>
<dbReference type="InterPro" id="IPR043141">
    <property type="entry name" value="Ribosomal_uL10-like_sf"/>
</dbReference>
<dbReference type="InterPro" id="IPR022973">
    <property type="entry name" value="Ribosomal_uL10_bac"/>
</dbReference>
<dbReference type="InterPro" id="IPR047865">
    <property type="entry name" value="Ribosomal_uL10_bac_type"/>
</dbReference>
<dbReference type="InterPro" id="IPR002363">
    <property type="entry name" value="Ribosomal_uL10_CS_bac"/>
</dbReference>
<dbReference type="NCBIfam" id="NF000955">
    <property type="entry name" value="PRK00099.1-1"/>
    <property type="match status" value="1"/>
</dbReference>
<dbReference type="PANTHER" id="PTHR11560">
    <property type="entry name" value="39S RIBOSOMAL PROTEIN L10, MITOCHONDRIAL"/>
    <property type="match status" value="1"/>
</dbReference>
<dbReference type="Pfam" id="PF00466">
    <property type="entry name" value="Ribosomal_L10"/>
    <property type="match status" value="1"/>
</dbReference>
<dbReference type="SUPFAM" id="SSF160369">
    <property type="entry name" value="Ribosomal protein L10-like"/>
    <property type="match status" value="1"/>
</dbReference>
<dbReference type="PROSITE" id="PS01109">
    <property type="entry name" value="RIBOSOMAL_L10"/>
    <property type="match status" value="1"/>
</dbReference>
<proteinExistence type="inferred from homology"/>
<comment type="function">
    <text evidence="1">Forms part of the ribosomal stalk, playing a central role in the interaction of the ribosome with GTP-bound translation factors.</text>
</comment>
<comment type="subunit">
    <text evidence="1">Part of the ribosomal stalk of the 50S ribosomal subunit. The N-terminus interacts with L11 and the large rRNA to form the base of the stalk. The C-terminus forms an elongated spine to which L12 dimers bind in a sequential fashion forming a multimeric L10(L12)X complex.</text>
</comment>
<comment type="similarity">
    <text evidence="1">Belongs to the universal ribosomal protein uL10 family.</text>
</comment>
<reference key="1">
    <citation type="journal article" date="2004" name="Nat. Genet.">
        <title>Evidence in the Legionella pneumophila genome for exploitation of host cell functions and high genome plasticity.</title>
        <authorList>
            <person name="Cazalet C."/>
            <person name="Rusniok C."/>
            <person name="Brueggemann H."/>
            <person name="Zidane N."/>
            <person name="Magnier A."/>
            <person name="Ma L."/>
            <person name="Tichit M."/>
            <person name="Jarraud S."/>
            <person name="Bouchier C."/>
            <person name="Vandenesch F."/>
            <person name="Kunst F."/>
            <person name="Etienne J."/>
            <person name="Glaser P."/>
            <person name="Buchrieser C."/>
        </authorList>
    </citation>
    <scope>NUCLEOTIDE SEQUENCE [LARGE SCALE GENOMIC DNA]</scope>
    <source>
        <strain>Paris</strain>
    </source>
</reference>
<sequence length="177" mass="19321">MTLNLAAKKAVVEEVTAVASKAISAVVADYRGLTVNQMTQLRSEARKSGVYLRVVRNTLTRRAFKNTEFECLNDLLVGPVFIALSLEAPSDAARLLKDYAKTFEKLEIRALSVGGKVYNANQIDAVASLPTRDEAISKLMYVMKAPIEKFVRTLAEPHAKLARTLAAVKDKKAGNPA</sequence>
<gene>
    <name evidence="1" type="primary">rplJ</name>
    <name type="ordered locus">lpp0385</name>
</gene>
<organism>
    <name type="scientific">Legionella pneumophila (strain Paris)</name>
    <dbReference type="NCBI Taxonomy" id="297246"/>
    <lineage>
        <taxon>Bacteria</taxon>
        <taxon>Pseudomonadati</taxon>
        <taxon>Pseudomonadota</taxon>
        <taxon>Gammaproteobacteria</taxon>
        <taxon>Legionellales</taxon>
        <taxon>Legionellaceae</taxon>
        <taxon>Legionella</taxon>
    </lineage>
</organism>
<protein>
    <recommendedName>
        <fullName evidence="1">Large ribosomal subunit protein uL10</fullName>
    </recommendedName>
    <alternativeName>
        <fullName evidence="2">50S ribosomal protein L10</fullName>
    </alternativeName>
</protein>
<name>RL10_LEGPA</name>